<gene>
    <name type="ordered locus">At3g44130</name>
    <name type="ORF">F26G5.80</name>
</gene>
<protein>
    <recommendedName>
        <fullName>Probable F-box protein At3g44130</fullName>
    </recommendedName>
</protein>
<accession>Q9LXQ0</accession>
<dbReference type="EMBL" id="AL353814">
    <property type="protein sequence ID" value="CAB88421.1"/>
    <property type="molecule type" value="Genomic_DNA"/>
</dbReference>
<dbReference type="EMBL" id="CP002686">
    <property type="protein sequence ID" value="AEE77867.1"/>
    <property type="molecule type" value="Genomic_DNA"/>
</dbReference>
<dbReference type="PIR" id="T49129">
    <property type="entry name" value="T49129"/>
</dbReference>
<dbReference type="RefSeq" id="NP_189999.1">
    <property type="nucleotide sequence ID" value="NM_114281.1"/>
</dbReference>
<dbReference type="BioGRID" id="8854">
    <property type="interactions" value="2"/>
</dbReference>
<dbReference type="iPTMnet" id="Q9LXQ0"/>
<dbReference type="PaxDb" id="3702-AT3G44130.1"/>
<dbReference type="EnsemblPlants" id="AT3G44130.1">
    <property type="protein sequence ID" value="AT3G44130.1"/>
    <property type="gene ID" value="AT3G44130"/>
</dbReference>
<dbReference type="GeneID" id="823534"/>
<dbReference type="Gramene" id="AT3G44130.1">
    <property type="protein sequence ID" value="AT3G44130.1"/>
    <property type="gene ID" value="AT3G44130"/>
</dbReference>
<dbReference type="KEGG" id="ath:AT3G44130"/>
<dbReference type="Araport" id="AT3G44130"/>
<dbReference type="TAIR" id="AT3G44130"/>
<dbReference type="HOGENOM" id="CLU_034692_2_1_1"/>
<dbReference type="InParanoid" id="Q9LXQ0"/>
<dbReference type="OMA" id="WIEYKEN"/>
<dbReference type="PhylomeDB" id="Q9LXQ0"/>
<dbReference type="PRO" id="PR:Q9LXQ0"/>
<dbReference type="Proteomes" id="UP000006548">
    <property type="component" value="Chromosome 3"/>
</dbReference>
<dbReference type="ExpressionAtlas" id="Q9LXQ0">
    <property type="expression patterns" value="baseline"/>
</dbReference>
<dbReference type="CDD" id="cd22157">
    <property type="entry name" value="F-box_AtFBW1-like"/>
    <property type="match status" value="1"/>
</dbReference>
<dbReference type="Gene3D" id="1.20.1280.50">
    <property type="match status" value="1"/>
</dbReference>
<dbReference type="InterPro" id="IPR050233">
    <property type="entry name" value="A_thaliana_F-box"/>
</dbReference>
<dbReference type="InterPro" id="IPR006527">
    <property type="entry name" value="F-box-assoc_dom_typ1"/>
</dbReference>
<dbReference type="InterPro" id="IPR017451">
    <property type="entry name" value="F-box-assoc_interact_dom"/>
</dbReference>
<dbReference type="InterPro" id="IPR036047">
    <property type="entry name" value="F-box-like_dom_sf"/>
</dbReference>
<dbReference type="InterPro" id="IPR001810">
    <property type="entry name" value="F-box_dom"/>
</dbReference>
<dbReference type="NCBIfam" id="TIGR01640">
    <property type="entry name" value="F_box_assoc_1"/>
    <property type="match status" value="1"/>
</dbReference>
<dbReference type="PANTHER" id="PTHR47993:SF385">
    <property type="entry name" value="F-BOX ASSOCIATED UBIQUITINATION EFFECTOR FAMILY PROTEIN-RELATED"/>
    <property type="match status" value="1"/>
</dbReference>
<dbReference type="PANTHER" id="PTHR47993">
    <property type="entry name" value="OS09G0372900 PROTEIN-RELATED"/>
    <property type="match status" value="1"/>
</dbReference>
<dbReference type="Pfam" id="PF00646">
    <property type="entry name" value="F-box"/>
    <property type="match status" value="1"/>
</dbReference>
<dbReference type="Pfam" id="PF07734">
    <property type="entry name" value="FBA_1"/>
    <property type="match status" value="1"/>
</dbReference>
<dbReference type="SMART" id="SM00256">
    <property type="entry name" value="FBOX"/>
    <property type="match status" value="1"/>
</dbReference>
<dbReference type="SUPFAM" id="SSF81383">
    <property type="entry name" value="F-box domain"/>
    <property type="match status" value="1"/>
</dbReference>
<dbReference type="PROSITE" id="PS50181">
    <property type="entry name" value="FBOX"/>
    <property type="match status" value="1"/>
</dbReference>
<name>FB339_ARATH</name>
<reference key="1">
    <citation type="journal article" date="2000" name="Nature">
        <title>Sequence and analysis of chromosome 3 of the plant Arabidopsis thaliana.</title>
        <authorList>
            <person name="Salanoubat M."/>
            <person name="Lemcke K."/>
            <person name="Rieger M."/>
            <person name="Ansorge W."/>
            <person name="Unseld M."/>
            <person name="Fartmann B."/>
            <person name="Valle G."/>
            <person name="Bloecker H."/>
            <person name="Perez-Alonso M."/>
            <person name="Obermaier B."/>
            <person name="Delseny M."/>
            <person name="Boutry M."/>
            <person name="Grivell L.A."/>
            <person name="Mache R."/>
            <person name="Puigdomenech P."/>
            <person name="De Simone V."/>
            <person name="Choisne N."/>
            <person name="Artiguenave F."/>
            <person name="Robert C."/>
            <person name="Brottier P."/>
            <person name="Wincker P."/>
            <person name="Cattolico L."/>
            <person name="Weissenbach J."/>
            <person name="Saurin W."/>
            <person name="Quetier F."/>
            <person name="Schaefer M."/>
            <person name="Mueller-Auer S."/>
            <person name="Gabel C."/>
            <person name="Fuchs M."/>
            <person name="Benes V."/>
            <person name="Wurmbach E."/>
            <person name="Drzonek H."/>
            <person name="Erfle H."/>
            <person name="Jordan N."/>
            <person name="Bangert S."/>
            <person name="Wiedelmann R."/>
            <person name="Kranz H."/>
            <person name="Voss H."/>
            <person name="Holland R."/>
            <person name="Brandt P."/>
            <person name="Nyakatura G."/>
            <person name="Vezzi A."/>
            <person name="D'Angelo M."/>
            <person name="Pallavicini A."/>
            <person name="Toppo S."/>
            <person name="Simionati B."/>
            <person name="Conrad A."/>
            <person name="Hornischer K."/>
            <person name="Kauer G."/>
            <person name="Loehnert T.-H."/>
            <person name="Nordsiek G."/>
            <person name="Reichelt J."/>
            <person name="Scharfe M."/>
            <person name="Schoen O."/>
            <person name="Bargues M."/>
            <person name="Terol J."/>
            <person name="Climent J."/>
            <person name="Navarro P."/>
            <person name="Collado C."/>
            <person name="Perez-Perez A."/>
            <person name="Ottenwaelder B."/>
            <person name="Duchemin D."/>
            <person name="Cooke R."/>
            <person name="Laudie M."/>
            <person name="Berger-Llauro C."/>
            <person name="Purnelle B."/>
            <person name="Masuy D."/>
            <person name="de Haan M."/>
            <person name="Maarse A.C."/>
            <person name="Alcaraz J.-P."/>
            <person name="Cottet A."/>
            <person name="Casacuberta E."/>
            <person name="Monfort A."/>
            <person name="Argiriou A."/>
            <person name="Flores M."/>
            <person name="Liguori R."/>
            <person name="Vitale D."/>
            <person name="Mannhaupt G."/>
            <person name="Haase D."/>
            <person name="Schoof H."/>
            <person name="Rudd S."/>
            <person name="Zaccaria P."/>
            <person name="Mewes H.-W."/>
            <person name="Mayer K.F.X."/>
            <person name="Kaul S."/>
            <person name="Town C.D."/>
            <person name="Koo H.L."/>
            <person name="Tallon L.J."/>
            <person name="Jenkins J."/>
            <person name="Rooney T."/>
            <person name="Rizzo M."/>
            <person name="Walts A."/>
            <person name="Utterback T."/>
            <person name="Fujii C.Y."/>
            <person name="Shea T.P."/>
            <person name="Creasy T.H."/>
            <person name="Haas B."/>
            <person name="Maiti R."/>
            <person name="Wu D."/>
            <person name="Peterson J."/>
            <person name="Van Aken S."/>
            <person name="Pai G."/>
            <person name="Militscher J."/>
            <person name="Sellers P."/>
            <person name="Gill J.E."/>
            <person name="Feldblyum T.V."/>
            <person name="Preuss D."/>
            <person name="Lin X."/>
            <person name="Nierman W.C."/>
            <person name="Salzberg S.L."/>
            <person name="White O."/>
            <person name="Venter J.C."/>
            <person name="Fraser C.M."/>
            <person name="Kaneko T."/>
            <person name="Nakamura Y."/>
            <person name="Sato S."/>
            <person name="Kato T."/>
            <person name="Asamizu E."/>
            <person name="Sasamoto S."/>
            <person name="Kimura T."/>
            <person name="Idesawa K."/>
            <person name="Kawashima K."/>
            <person name="Kishida Y."/>
            <person name="Kiyokawa C."/>
            <person name="Kohara M."/>
            <person name="Matsumoto M."/>
            <person name="Matsuno A."/>
            <person name="Muraki A."/>
            <person name="Nakayama S."/>
            <person name="Nakazaki N."/>
            <person name="Shinpo S."/>
            <person name="Takeuchi C."/>
            <person name="Wada T."/>
            <person name="Watanabe A."/>
            <person name="Yamada M."/>
            <person name="Yasuda M."/>
            <person name="Tabata S."/>
        </authorList>
    </citation>
    <scope>NUCLEOTIDE SEQUENCE [LARGE SCALE GENOMIC DNA]</scope>
    <source>
        <strain>cv. Columbia</strain>
    </source>
</reference>
<reference key="2">
    <citation type="journal article" date="2017" name="Plant J.">
        <title>Araport11: a complete reannotation of the Arabidopsis thaliana reference genome.</title>
        <authorList>
            <person name="Cheng C.Y."/>
            <person name="Krishnakumar V."/>
            <person name="Chan A.P."/>
            <person name="Thibaud-Nissen F."/>
            <person name="Schobel S."/>
            <person name="Town C.D."/>
        </authorList>
    </citation>
    <scope>GENOME REANNOTATION</scope>
    <source>
        <strain>cv. Columbia</strain>
    </source>
</reference>
<proteinExistence type="predicted"/>
<sequence length="313" mass="36439">MASGNLPWELEEEILCRLPLGSLVRLRSVCKHWNDFFNDKWFIKKSLGCARPQFIILPESKIYSIGTIGLDGVDPKIEVRELACQFHFEAEKWAFTAACDGLLFRDFWNQGVTIWNPWLRQVGWIEYKENRDFRFCGVGYDAGKPEKGYKIFGYFNRFYDTKLKIDHRFAIFECASQAVKFIDSPEWPMLAGRGEYVSLNGNLYWTAYNEETREHFLGSFNFSTEISMRFCLLPCAKHVSGLRDKLVLTVFKGDRFALLKQSRISKDTKVLTAQYGPKARTKKNENAEKACLKSYGSLKPDRLEKLKKSMKRY</sequence>
<keyword id="KW-1185">Reference proteome</keyword>
<feature type="chain" id="PRO_0000396055" description="Probable F-box protein At3g44130">
    <location>
        <begin position="1"/>
        <end position="313"/>
    </location>
</feature>
<feature type="domain" description="F-box" evidence="1">
    <location>
        <begin position="1"/>
        <end position="46"/>
    </location>
</feature>
<evidence type="ECO:0000255" key="1">
    <source>
        <dbReference type="PROSITE-ProRule" id="PRU00080"/>
    </source>
</evidence>
<organism>
    <name type="scientific">Arabidopsis thaliana</name>
    <name type="common">Mouse-ear cress</name>
    <dbReference type="NCBI Taxonomy" id="3702"/>
    <lineage>
        <taxon>Eukaryota</taxon>
        <taxon>Viridiplantae</taxon>
        <taxon>Streptophyta</taxon>
        <taxon>Embryophyta</taxon>
        <taxon>Tracheophyta</taxon>
        <taxon>Spermatophyta</taxon>
        <taxon>Magnoliopsida</taxon>
        <taxon>eudicotyledons</taxon>
        <taxon>Gunneridae</taxon>
        <taxon>Pentapetalae</taxon>
        <taxon>rosids</taxon>
        <taxon>malvids</taxon>
        <taxon>Brassicales</taxon>
        <taxon>Brassicaceae</taxon>
        <taxon>Camelineae</taxon>
        <taxon>Arabidopsis</taxon>
    </lineage>
</organism>